<dbReference type="EMBL" id="CU329670">
    <property type="protein sequence ID" value="CAB90589.1"/>
    <property type="molecule type" value="Genomic_DNA"/>
</dbReference>
<dbReference type="RefSeq" id="NP_594126.1">
    <property type="nucleotide sequence ID" value="NM_001019550.2"/>
</dbReference>
<dbReference type="BioGRID" id="279982">
    <property type="interactions" value="2"/>
</dbReference>
<dbReference type="PaxDb" id="4896-SPAC652.01.1"/>
<dbReference type="EnsemblFungi" id="SPAC652.01.1">
    <property type="protein sequence ID" value="SPAC652.01.1:pep"/>
    <property type="gene ID" value="SPAC652.01"/>
</dbReference>
<dbReference type="KEGG" id="spo:2543566"/>
<dbReference type="PomBase" id="SPAC652.01"/>
<dbReference type="VEuPathDB" id="FungiDB:SPAC652.01"/>
<dbReference type="HOGENOM" id="CLU_2198511_0_0_1"/>
<dbReference type="InParanoid" id="Q9P6M5"/>
<dbReference type="OMA" id="CLRYFIP"/>
<dbReference type="PhylomeDB" id="Q9P6M5"/>
<dbReference type="PRO" id="PR:Q9P6M5"/>
<dbReference type="Proteomes" id="UP000002485">
    <property type="component" value="Chromosome I"/>
</dbReference>
<dbReference type="GO" id="GO:0016020">
    <property type="term" value="C:membrane"/>
    <property type="evidence" value="ECO:0007669"/>
    <property type="project" value="UniProtKB-SubCell"/>
</dbReference>
<dbReference type="InterPro" id="IPR009598">
    <property type="entry name" value="BCALP"/>
</dbReference>
<dbReference type="PANTHER" id="PTHR13259">
    <property type="entry name" value="BLADDER CANCER 10 KD PROTEIN HOMOLOG"/>
    <property type="match status" value="1"/>
</dbReference>
<dbReference type="PANTHER" id="PTHR13259:SF1">
    <property type="entry name" value="BLADDER CANCER-ASSOCIATED PROTEIN"/>
    <property type="match status" value="1"/>
</dbReference>
<dbReference type="Pfam" id="PF06726">
    <property type="entry name" value="BC10"/>
    <property type="match status" value="1"/>
</dbReference>
<dbReference type="SMART" id="SM01396">
    <property type="entry name" value="BC10"/>
    <property type="match status" value="1"/>
</dbReference>
<gene>
    <name type="ORF">SPAC652.01</name>
</gene>
<accession>Q9P6M5</accession>
<sequence>MLCLRYFIPMLLVANAAPYFFYPIFMLSMIARKYPCPYCMIILGLLINTRTLWSDSTFFSFNRNIFDTKAFPTELKEAGYRLVRLSWIRWLAGKESIHIPWLDATIKL</sequence>
<organism>
    <name type="scientific">Schizosaccharomyces pombe (strain 972 / ATCC 24843)</name>
    <name type="common">Fission yeast</name>
    <dbReference type="NCBI Taxonomy" id="284812"/>
    <lineage>
        <taxon>Eukaryota</taxon>
        <taxon>Fungi</taxon>
        <taxon>Dikarya</taxon>
        <taxon>Ascomycota</taxon>
        <taxon>Taphrinomycotina</taxon>
        <taxon>Schizosaccharomycetes</taxon>
        <taxon>Schizosaccharomycetales</taxon>
        <taxon>Schizosaccharomycetaceae</taxon>
        <taxon>Schizosaccharomyces</taxon>
    </lineage>
</organism>
<keyword id="KW-0472">Membrane</keyword>
<keyword id="KW-1185">Reference proteome</keyword>
<keyword id="KW-0812">Transmembrane</keyword>
<keyword id="KW-1133">Transmembrane helix</keyword>
<name>YKS1_SCHPO</name>
<feature type="chain" id="PRO_0000116833" description="Uncharacterized protein C652.01">
    <location>
        <begin position="1"/>
        <end position="108"/>
    </location>
</feature>
<feature type="transmembrane region" description="Helical" evidence="1">
    <location>
        <begin position="7"/>
        <end position="27"/>
    </location>
</feature>
<protein>
    <recommendedName>
        <fullName>Uncharacterized protein C652.01</fullName>
    </recommendedName>
</protein>
<reference key="1">
    <citation type="journal article" date="2002" name="Nature">
        <title>The genome sequence of Schizosaccharomyces pombe.</title>
        <authorList>
            <person name="Wood V."/>
            <person name="Gwilliam R."/>
            <person name="Rajandream M.A."/>
            <person name="Lyne M.H."/>
            <person name="Lyne R."/>
            <person name="Stewart A."/>
            <person name="Sgouros J.G."/>
            <person name="Peat N."/>
            <person name="Hayles J."/>
            <person name="Baker S.G."/>
            <person name="Basham D."/>
            <person name="Bowman S."/>
            <person name="Brooks K."/>
            <person name="Brown D."/>
            <person name="Brown S."/>
            <person name="Chillingworth T."/>
            <person name="Churcher C.M."/>
            <person name="Collins M."/>
            <person name="Connor R."/>
            <person name="Cronin A."/>
            <person name="Davis P."/>
            <person name="Feltwell T."/>
            <person name="Fraser A."/>
            <person name="Gentles S."/>
            <person name="Goble A."/>
            <person name="Hamlin N."/>
            <person name="Harris D.E."/>
            <person name="Hidalgo J."/>
            <person name="Hodgson G."/>
            <person name="Holroyd S."/>
            <person name="Hornsby T."/>
            <person name="Howarth S."/>
            <person name="Huckle E.J."/>
            <person name="Hunt S."/>
            <person name="Jagels K."/>
            <person name="James K.D."/>
            <person name="Jones L."/>
            <person name="Jones M."/>
            <person name="Leather S."/>
            <person name="McDonald S."/>
            <person name="McLean J."/>
            <person name="Mooney P."/>
            <person name="Moule S."/>
            <person name="Mungall K.L."/>
            <person name="Murphy L.D."/>
            <person name="Niblett D."/>
            <person name="Odell C."/>
            <person name="Oliver K."/>
            <person name="O'Neil S."/>
            <person name="Pearson D."/>
            <person name="Quail M.A."/>
            <person name="Rabbinowitsch E."/>
            <person name="Rutherford K.M."/>
            <person name="Rutter S."/>
            <person name="Saunders D."/>
            <person name="Seeger K."/>
            <person name="Sharp S."/>
            <person name="Skelton J."/>
            <person name="Simmonds M.N."/>
            <person name="Squares R."/>
            <person name="Squares S."/>
            <person name="Stevens K."/>
            <person name="Taylor K."/>
            <person name="Taylor R.G."/>
            <person name="Tivey A."/>
            <person name="Walsh S.V."/>
            <person name="Warren T."/>
            <person name="Whitehead S."/>
            <person name="Woodward J.R."/>
            <person name="Volckaert G."/>
            <person name="Aert R."/>
            <person name="Robben J."/>
            <person name="Grymonprez B."/>
            <person name="Weltjens I."/>
            <person name="Vanstreels E."/>
            <person name="Rieger M."/>
            <person name="Schaefer M."/>
            <person name="Mueller-Auer S."/>
            <person name="Gabel C."/>
            <person name="Fuchs M."/>
            <person name="Duesterhoeft A."/>
            <person name="Fritzc C."/>
            <person name="Holzer E."/>
            <person name="Moestl D."/>
            <person name="Hilbert H."/>
            <person name="Borzym K."/>
            <person name="Langer I."/>
            <person name="Beck A."/>
            <person name="Lehrach H."/>
            <person name="Reinhardt R."/>
            <person name="Pohl T.M."/>
            <person name="Eger P."/>
            <person name="Zimmermann W."/>
            <person name="Wedler H."/>
            <person name="Wambutt R."/>
            <person name="Purnelle B."/>
            <person name="Goffeau A."/>
            <person name="Cadieu E."/>
            <person name="Dreano S."/>
            <person name="Gloux S."/>
            <person name="Lelaure V."/>
            <person name="Mottier S."/>
            <person name="Galibert F."/>
            <person name="Aves S.J."/>
            <person name="Xiang Z."/>
            <person name="Hunt C."/>
            <person name="Moore K."/>
            <person name="Hurst S.M."/>
            <person name="Lucas M."/>
            <person name="Rochet M."/>
            <person name="Gaillardin C."/>
            <person name="Tallada V.A."/>
            <person name="Garzon A."/>
            <person name="Thode G."/>
            <person name="Daga R.R."/>
            <person name="Cruzado L."/>
            <person name="Jimenez J."/>
            <person name="Sanchez M."/>
            <person name="del Rey F."/>
            <person name="Benito J."/>
            <person name="Dominguez A."/>
            <person name="Revuelta J.L."/>
            <person name="Moreno S."/>
            <person name="Armstrong J."/>
            <person name="Forsburg S.L."/>
            <person name="Cerutti L."/>
            <person name="Lowe T."/>
            <person name="McCombie W.R."/>
            <person name="Paulsen I."/>
            <person name="Potashkin J."/>
            <person name="Shpakovski G.V."/>
            <person name="Ussery D."/>
            <person name="Barrell B.G."/>
            <person name="Nurse P."/>
        </authorList>
    </citation>
    <scope>NUCLEOTIDE SEQUENCE [LARGE SCALE GENOMIC DNA]</scope>
    <source>
        <strain>972 / ATCC 24843</strain>
    </source>
</reference>
<proteinExistence type="predicted"/>
<comment type="subcellular location">
    <subcellularLocation>
        <location evidence="2">Membrane</location>
        <topology evidence="2">Single-pass membrane protein</topology>
    </subcellularLocation>
</comment>
<comment type="similarity">
    <text evidence="2">To N.crassa NCU05373.1.</text>
</comment>
<evidence type="ECO:0000255" key="1"/>
<evidence type="ECO:0000305" key="2"/>